<keyword id="KW-0028">Amino-acid biosynthesis</keyword>
<keyword id="KW-0368">Histidine biosynthesis</keyword>
<keyword id="KW-0378">Hydrolase</keyword>
<keyword id="KW-0486">Methionine biosynthesis</keyword>
<keyword id="KW-0511">Multifunctional enzyme</keyword>
<keyword id="KW-0521">NADP</keyword>
<keyword id="KW-0554">One-carbon metabolism</keyword>
<keyword id="KW-0560">Oxidoreductase</keyword>
<keyword id="KW-0658">Purine biosynthesis</keyword>
<keyword id="KW-1185">Reference proteome</keyword>
<proteinExistence type="inferred from homology"/>
<name>FOLD_MYCPA</name>
<accession>Q73UA5</accession>
<reference key="1">
    <citation type="journal article" date="2005" name="Proc. Natl. Acad. Sci. U.S.A.">
        <title>The complete genome sequence of Mycobacterium avium subspecies paratuberculosis.</title>
        <authorList>
            <person name="Li L."/>
            <person name="Bannantine J.P."/>
            <person name="Zhang Q."/>
            <person name="Amonsin A."/>
            <person name="May B.J."/>
            <person name="Alt D."/>
            <person name="Banerji N."/>
            <person name="Kanjilal S."/>
            <person name="Kapur V."/>
        </authorList>
    </citation>
    <scope>NUCLEOTIDE SEQUENCE [LARGE SCALE GENOMIC DNA]</scope>
    <source>
        <strain>ATCC BAA-968 / K-10</strain>
    </source>
</reference>
<comment type="function">
    <text evidence="1">Catalyzes the oxidation of 5,10-methylenetetrahydrofolate to 5,10-methenyltetrahydrofolate and then the hydrolysis of 5,10-methenyltetrahydrofolate to 10-formyltetrahydrofolate.</text>
</comment>
<comment type="catalytic activity">
    <reaction evidence="1">
        <text>(6R)-5,10-methylene-5,6,7,8-tetrahydrofolate + NADP(+) = (6R)-5,10-methenyltetrahydrofolate + NADPH</text>
        <dbReference type="Rhea" id="RHEA:22812"/>
        <dbReference type="ChEBI" id="CHEBI:15636"/>
        <dbReference type="ChEBI" id="CHEBI:57455"/>
        <dbReference type="ChEBI" id="CHEBI:57783"/>
        <dbReference type="ChEBI" id="CHEBI:58349"/>
        <dbReference type="EC" id="1.5.1.5"/>
    </reaction>
</comment>
<comment type="catalytic activity">
    <reaction evidence="1">
        <text>(6R)-5,10-methenyltetrahydrofolate + H2O = (6R)-10-formyltetrahydrofolate + H(+)</text>
        <dbReference type="Rhea" id="RHEA:23700"/>
        <dbReference type="ChEBI" id="CHEBI:15377"/>
        <dbReference type="ChEBI" id="CHEBI:15378"/>
        <dbReference type="ChEBI" id="CHEBI:57455"/>
        <dbReference type="ChEBI" id="CHEBI:195366"/>
        <dbReference type="EC" id="3.5.4.9"/>
    </reaction>
</comment>
<comment type="pathway">
    <text evidence="1">One-carbon metabolism; tetrahydrofolate interconversion.</text>
</comment>
<comment type="subunit">
    <text evidence="1">Homodimer.</text>
</comment>
<comment type="similarity">
    <text evidence="1">Belongs to the tetrahydrofolate dehydrogenase/cyclohydrolase family.</text>
</comment>
<organism>
    <name type="scientific">Mycolicibacterium paratuberculosis (strain ATCC BAA-968 / K-10)</name>
    <name type="common">Mycobacterium paratuberculosis</name>
    <dbReference type="NCBI Taxonomy" id="262316"/>
    <lineage>
        <taxon>Bacteria</taxon>
        <taxon>Bacillati</taxon>
        <taxon>Actinomycetota</taxon>
        <taxon>Actinomycetes</taxon>
        <taxon>Mycobacteriales</taxon>
        <taxon>Mycobacteriaceae</taxon>
        <taxon>Mycobacterium</taxon>
        <taxon>Mycobacterium avium complex (MAC)</taxon>
    </lineage>
</organism>
<dbReference type="EC" id="1.5.1.5" evidence="1"/>
<dbReference type="EC" id="3.5.4.9" evidence="1"/>
<dbReference type="EMBL" id="AE016958">
    <property type="protein sequence ID" value="AAS06013.1"/>
    <property type="molecule type" value="Genomic_DNA"/>
</dbReference>
<dbReference type="RefSeq" id="WP_003874457.1">
    <property type="nucleotide sequence ID" value="NC_002944.2"/>
</dbReference>
<dbReference type="SMR" id="Q73UA5"/>
<dbReference type="STRING" id="262316.MAP_3463c"/>
<dbReference type="KEGG" id="mpa:MAP_3463c"/>
<dbReference type="eggNOG" id="COG0190">
    <property type="taxonomic scope" value="Bacteria"/>
</dbReference>
<dbReference type="HOGENOM" id="CLU_034045_3_0_11"/>
<dbReference type="UniPathway" id="UPA00193"/>
<dbReference type="Proteomes" id="UP000000580">
    <property type="component" value="Chromosome"/>
</dbReference>
<dbReference type="GO" id="GO:0005829">
    <property type="term" value="C:cytosol"/>
    <property type="evidence" value="ECO:0007669"/>
    <property type="project" value="TreeGrafter"/>
</dbReference>
<dbReference type="GO" id="GO:0004477">
    <property type="term" value="F:methenyltetrahydrofolate cyclohydrolase activity"/>
    <property type="evidence" value="ECO:0007669"/>
    <property type="project" value="UniProtKB-UniRule"/>
</dbReference>
<dbReference type="GO" id="GO:0004488">
    <property type="term" value="F:methylenetetrahydrofolate dehydrogenase (NADP+) activity"/>
    <property type="evidence" value="ECO:0007669"/>
    <property type="project" value="UniProtKB-UniRule"/>
</dbReference>
<dbReference type="GO" id="GO:0000105">
    <property type="term" value="P:L-histidine biosynthetic process"/>
    <property type="evidence" value="ECO:0007669"/>
    <property type="project" value="UniProtKB-KW"/>
</dbReference>
<dbReference type="GO" id="GO:0009086">
    <property type="term" value="P:methionine biosynthetic process"/>
    <property type="evidence" value="ECO:0007669"/>
    <property type="project" value="UniProtKB-KW"/>
</dbReference>
<dbReference type="GO" id="GO:0006164">
    <property type="term" value="P:purine nucleotide biosynthetic process"/>
    <property type="evidence" value="ECO:0007669"/>
    <property type="project" value="UniProtKB-KW"/>
</dbReference>
<dbReference type="GO" id="GO:0035999">
    <property type="term" value="P:tetrahydrofolate interconversion"/>
    <property type="evidence" value="ECO:0007669"/>
    <property type="project" value="UniProtKB-UniRule"/>
</dbReference>
<dbReference type="CDD" id="cd01080">
    <property type="entry name" value="NAD_bind_m-THF_DH_Cyclohyd"/>
    <property type="match status" value="1"/>
</dbReference>
<dbReference type="FunFam" id="3.40.50.720:FF:000094">
    <property type="entry name" value="Bifunctional protein FolD"/>
    <property type="match status" value="1"/>
</dbReference>
<dbReference type="FunFam" id="3.40.50.10860:FF:000005">
    <property type="entry name" value="C-1-tetrahydrofolate synthase, cytoplasmic, putative"/>
    <property type="match status" value="1"/>
</dbReference>
<dbReference type="Gene3D" id="3.40.50.10860">
    <property type="entry name" value="Leucine Dehydrogenase, chain A, domain 1"/>
    <property type="match status" value="1"/>
</dbReference>
<dbReference type="Gene3D" id="3.40.50.720">
    <property type="entry name" value="NAD(P)-binding Rossmann-like Domain"/>
    <property type="match status" value="1"/>
</dbReference>
<dbReference type="HAMAP" id="MF_01576">
    <property type="entry name" value="THF_DHG_CYH"/>
    <property type="match status" value="1"/>
</dbReference>
<dbReference type="InterPro" id="IPR046346">
    <property type="entry name" value="Aminoacid_DH-like_N_sf"/>
</dbReference>
<dbReference type="InterPro" id="IPR036291">
    <property type="entry name" value="NAD(P)-bd_dom_sf"/>
</dbReference>
<dbReference type="InterPro" id="IPR000672">
    <property type="entry name" value="THF_DH/CycHdrlase"/>
</dbReference>
<dbReference type="InterPro" id="IPR020630">
    <property type="entry name" value="THF_DH/CycHdrlase_cat_dom"/>
</dbReference>
<dbReference type="InterPro" id="IPR020631">
    <property type="entry name" value="THF_DH/CycHdrlase_NAD-bd_dom"/>
</dbReference>
<dbReference type="NCBIfam" id="NF010789">
    <property type="entry name" value="PRK14193.1"/>
    <property type="match status" value="1"/>
</dbReference>
<dbReference type="PANTHER" id="PTHR48099:SF5">
    <property type="entry name" value="C-1-TETRAHYDROFOLATE SYNTHASE, CYTOPLASMIC"/>
    <property type="match status" value="1"/>
</dbReference>
<dbReference type="PANTHER" id="PTHR48099">
    <property type="entry name" value="C-1-TETRAHYDROFOLATE SYNTHASE, CYTOPLASMIC-RELATED"/>
    <property type="match status" value="1"/>
</dbReference>
<dbReference type="Pfam" id="PF00763">
    <property type="entry name" value="THF_DHG_CYH"/>
    <property type="match status" value="1"/>
</dbReference>
<dbReference type="Pfam" id="PF02882">
    <property type="entry name" value="THF_DHG_CYH_C"/>
    <property type="match status" value="1"/>
</dbReference>
<dbReference type="PRINTS" id="PR00085">
    <property type="entry name" value="THFDHDRGNASE"/>
</dbReference>
<dbReference type="SUPFAM" id="SSF53223">
    <property type="entry name" value="Aminoacid dehydrogenase-like, N-terminal domain"/>
    <property type="match status" value="1"/>
</dbReference>
<dbReference type="SUPFAM" id="SSF51735">
    <property type="entry name" value="NAD(P)-binding Rossmann-fold domains"/>
    <property type="match status" value="1"/>
</dbReference>
<protein>
    <recommendedName>
        <fullName evidence="1">Bifunctional protein FolD</fullName>
    </recommendedName>
    <domain>
        <recommendedName>
            <fullName evidence="1">Methylenetetrahydrofolate dehydrogenase</fullName>
            <ecNumber evidence="1">1.5.1.5</ecNumber>
        </recommendedName>
    </domain>
    <domain>
        <recommendedName>
            <fullName evidence="1">Methenyltetrahydrofolate cyclohydrolase</fullName>
            <ecNumber evidence="1">3.5.4.9</ecNumber>
        </recommendedName>
    </domain>
</protein>
<evidence type="ECO:0000255" key="1">
    <source>
        <dbReference type="HAMAP-Rule" id="MF_01576"/>
    </source>
</evidence>
<sequence length="281" mass="29539">MGAITLDGKATRDEIFVDLKQRVAALTAAGRTPGLGTILVGDDPGSQAYVRGKHADCAKVGITSIRRDLPADISTAALNDTIDELNANPECTGYIVQLPLPKQLDENAALERVDPDKDADGLHPTNLGRLVLNNPAPLPCTPRGIVHLLRRYDAEIAGAHVVVIGRGVTVGRPLGLLLTRRSENATVTLCHTGTRDLPALTRQADIIVAAVGVPHLLTADMVRPGAAVLDVGVSRVDGKLAGDVHPDVWEVAGHVSPNPGGVGPLTRAFLLTNVVELAERE</sequence>
<gene>
    <name evidence="1" type="primary">folD</name>
    <name type="ordered locus">MAP_3463c</name>
</gene>
<feature type="chain" id="PRO_0000268402" description="Bifunctional protein FolD">
    <location>
        <begin position="1"/>
        <end position="281"/>
    </location>
</feature>
<feature type="binding site" evidence="1">
    <location>
        <begin position="165"/>
        <end position="167"/>
    </location>
    <ligand>
        <name>NADP(+)</name>
        <dbReference type="ChEBI" id="CHEBI:58349"/>
    </ligand>
</feature>
<feature type="binding site" evidence="1">
    <location>
        <position position="192"/>
    </location>
    <ligand>
        <name>NADP(+)</name>
        <dbReference type="ChEBI" id="CHEBI:58349"/>
    </ligand>
</feature>
<feature type="binding site" evidence="1">
    <location>
        <position position="233"/>
    </location>
    <ligand>
        <name>NADP(+)</name>
        <dbReference type="ChEBI" id="CHEBI:58349"/>
    </ligand>
</feature>